<comment type="function">
    <text evidence="1">Catalyzes the condensation of the acetyl group of acetyl-CoA with 3-methyl-2-oxobutanoate (2-ketoisovalerate) to form 3-carboxy-3-hydroxy-4-methylpentanoate (2-isopropylmalate).</text>
</comment>
<comment type="catalytic activity">
    <reaction evidence="1">
        <text>3-methyl-2-oxobutanoate + acetyl-CoA + H2O = (2S)-2-isopropylmalate + CoA + H(+)</text>
        <dbReference type="Rhea" id="RHEA:21524"/>
        <dbReference type="ChEBI" id="CHEBI:1178"/>
        <dbReference type="ChEBI" id="CHEBI:11851"/>
        <dbReference type="ChEBI" id="CHEBI:15377"/>
        <dbReference type="ChEBI" id="CHEBI:15378"/>
        <dbReference type="ChEBI" id="CHEBI:57287"/>
        <dbReference type="ChEBI" id="CHEBI:57288"/>
        <dbReference type="EC" id="2.3.3.13"/>
    </reaction>
</comment>
<comment type="cofactor">
    <cofactor evidence="1">
        <name>Mn(2+)</name>
        <dbReference type="ChEBI" id="CHEBI:29035"/>
    </cofactor>
</comment>
<comment type="pathway">
    <text evidence="1">Amino-acid biosynthesis; L-leucine biosynthesis; L-leucine from 3-methyl-2-oxobutanoate: step 1/4.</text>
</comment>
<comment type="subunit">
    <text evidence="1">Homodimer.</text>
</comment>
<comment type="subcellular location">
    <subcellularLocation>
        <location evidence="1">Cytoplasm</location>
    </subcellularLocation>
</comment>
<comment type="similarity">
    <text evidence="1">Belongs to the alpha-IPM synthase/homocitrate synthase family. LeuA type 1 subfamily.</text>
</comment>
<sequence length="528" mass="57113">MTTIERITTPRIRIFDTTLRDGEQSPGCSMSPPQKLVMARALDELGVDIIETGFPASSQSDRDAMALIGRELRRPSLSLAVLSRCLQADIETSARALEAAANPRLHVFLSTSPLHREHKLRMTREQVLESVRKHVSLARSYIDDVEFSAEDATRTELDYLIEVSRAAISAGATTINLPDTVGFTTPEEIREMFQQVIAGVADVPNAANVIFSAHCHNDLGLAVANSLAAIEGGARQVECTVNGIGERAGNCSLEEIAMVLKVRQAFYEQDSSINTPRIVGTSQLLQRLVGMPVQRNKAIVGANAFAHESGIHQHGMLRHRGTYEIMRPEDVGWEDSQMVLGRHSGRAAVEARLRALGFWLEEDELKLVFEQFKGLCEQQRVVTDADLQTLMQGGSNAQGYRLASMTISDVGSRANALVELSDPDGNRVAETAQGDGPVDALFGALSAATGVQLMLDSYHVHSVGIGADARGEANLSVRHEGVEYDGTGTSKDIIEASALAWLDVANRLLRQRQANAASTTEAPAPATA</sequence>
<keyword id="KW-0028">Amino-acid biosynthesis</keyword>
<keyword id="KW-0100">Branched-chain amino acid biosynthesis</keyword>
<keyword id="KW-0963">Cytoplasm</keyword>
<keyword id="KW-0432">Leucine biosynthesis</keyword>
<keyword id="KW-0464">Manganese</keyword>
<keyword id="KW-0479">Metal-binding</keyword>
<keyword id="KW-0808">Transferase</keyword>
<dbReference type="EC" id="2.3.3.13" evidence="1"/>
<dbReference type="EMBL" id="CP001111">
    <property type="protein sequence ID" value="ACF53031.1"/>
    <property type="molecule type" value="Genomic_DNA"/>
</dbReference>
<dbReference type="RefSeq" id="WP_012512041.1">
    <property type="nucleotide sequence ID" value="NC_011071.1"/>
</dbReference>
<dbReference type="SMR" id="B4SI67"/>
<dbReference type="STRING" id="391008.Smal_3332"/>
<dbReference type="KEGG" id="smt:Smal_3332"/>
<dbReference type="eggNOG" id="COG0119">
    <property type="taxonomic scope" value="Bacteria"/>
</dbReference>
<dbReference type="HOGENOM" id="CLU_022158_0_1_6"/>
<dbReference type="OrthoDB" id="9803573at2"/>
<dbReference type="UniPathway" id="UPA00048">
    <property type="reaction ID" value="UER00070"/>
</dbReference>
<dbReference type="Proteomes" id="UP000001867">
    <property type="component" value="Chromosome"/>
</dbReference>
<dbReference type="GO" id="GO:0005829">
    <property type="term" value="C:cytosol"/>
    <property type="evidence" value="ECO:0007669"/>
    <property type="project" value="TreeGrafter"/>
</dbReference>
<dbReference type="GO" id="GO:0003852">
    <property type="term" value="F:2-isopropylmalate synthase activity"/>
    <property type="evidence" value="ECO:0007669"/>
    <property type="project" value="UniProtKB-UniRule"/>
</dbReference>
<dbReference type="GO" id="GO:0003985">
    <property type="term" value="F:acetyl-CoA C-acetyltransferase activity"/>
    <property type="evidence" value="ECO:0007669"/>
    <property type="project" value="UniProtKB-UniRule"/>
</dbReference>
<dbReference type="GO" id="GO:0030145">
    <property type="term" value="F:manganese ion binding"/>
    <property type="evidence" value="ECO:0007669"/>
    <property type="project" value="UniProtKB-UniRule"/>
</dbReference>
<dbReference type="GO" id="GO:0009098">
    <property type="term" value="P:L-leucine biosynthetic process"/>
    <property type="evidence" value="ECO:0007669"/>
    <property type="project" value="UniProtKB-UniRule"/>
</dbReference>
<dbReference type="CDD" id="cd07940">
    <property type="entry name" value="DRE_TIM_IPMS"/>
    <property type="match status" value="1"/>
</dbReference>
<dbReference type="FunFam" id="1.10.238.260:FF:000001">
    <property type="entry name" value="2-isopropylmalate synthase"/>
    <property type="match status" value="1"/>
</dbReference>
<dbReference type="FunFam" id="3.20.20.70:FF:000010">
    <property type="entry name" value="2-isopropylmalate synthase"/>
    <property type="match status" value="1"/>
</dbReference>
<dbReference type="FunFam" id="3.30.160.270:FF:000003">
    <property type="entry name" value="2-isopropylmalate synthase"/>
    <property type="match status" value="1"/>
</dbReference>
<dbReference type="Gene3D" id="1.10.238.260">
    <property type="match status" value="1"/>
</dbReference>
<dbReference type="Gene3D" id="3.30.160.270">
    <property type="match status" value="1"/>
</dbReference>
<dbReference type="Gene3D" id="3.20.20.70">
    <property type="entry name" value="Aldolase class I"/>
    <property type="match status" value="1"/>
</dbReference>
<dbReference type="HAMAP" id="MF_01025">
    <property type="entry name" value="LeuA_type1"/>
    <property type="match status" value="1"/>
</dbReference>
<dbReference type="InterPro" id="IPR050073">
    <property type="entry name" value="2-IPM_HCS-like"/>
</dbReference>
<dbReference type="InterPro" id="IPR013709">
    <property type="entry name" value="2-isopropylmalate_synth_dimer"/>
</dbReference>
<dbReference type="InterPro" id="IPR002034">
    <property type="entry name" value="AIPM/Hcit_synth_CS"/>
</dbReference>
<dbReference type="InterPro" id="IPR013785">
    <property type="entry name" value="Aldolase_TIM"/>
</dbReference>
<dbReference type="InterPro" id="IPR054691">
    <property type="entry name" value="LeuA/HCS_post-cat"/>
</dbReference>
<dbReference type="InterPro" id="IPR036230">
    <property type="entry name" value="LeuA_allosteric_dom_sf"/>
</dbReference>
<dbReference type="InterPro" id="IPR005671">
    <property type="entry name" value="LeuA_bact_synth"/>
</dbReference>
<dbReference type="InterPro" id="IPR000891">
    <property type="entry name" value="PYR_CT"/>
</dbReference>
<dbReference type="NCBIfam" id="TIGR00973">
    <property type="entry name" value="leuA_bact"/>
    <property type="match status" value="1"/>
</dbReference>
<dbReference type="NCBIfam" id="NF002086">
    <property type="entry name" value="PRK00915.1-3"/>
    <property type="match status" value="1"/>
</dbReference>
<dbReference type="PANTHER" id="PTHR10277:SF9">
    <property type="entry name" value="2-ISOPROPYLMALATE SYNTHASE 1, CHLOROPLASTIC-RELATED"/>
    <property type="match status" value="1"/>
</dbReference>
<dbReference type="PANTHER" id="PTHR10277">
    <property type="entry name" value="HOMOCITRATE SYNTHASE-RELATED"/>
    <property type="match status" value="1"/>
</dbReference>
<dbReference type="Pfam" id="PF22617">
    <property type="entry name" value="HCS_D2"/>
    <property type="match status" value="1"/>
</dbReference>
<dbReference type="Pfam" id="PF00682">
    <property type="entry name" value="HMGL-like"/>
    <property type="match status" value="1"/>
</dbReference>
<dbReference type="Pfam" id="PF08502">
    <property type="entry name" value="LeuA_dimer"/>
    <property type="match status" value="1"/>
</dbReference>
<dbReference type="SMART" id="SM00917">
    <property type="entry name" value="LeuA_dimer"/>
    <property type="match status" value="1"/>
</dbReference>
<dbReference type="SUPFAM" id="SSF110921">
    <property type="entry name" value="2-isopropylmalate synthase LeuA, allosteric (dimerisation) domain"/>
    <property type="match status" value="1"/>
</dbReference>
<dbReference type="SUPFAM" id="SSF51569">
    <property type="entry name" value="Aldolase"/>
    <property type="match status" value="1"/>
</dbReference>
<dbReference type="PROSITE" id="PS00815">
    <property type="entry name" value="AIPM_HOMOCIT_SYNTH_1"/>
    <property type="match status" value="1"/>
</dbReference>
<dbReference type="PROSITE" id="PS00816">
    <property type="entry name" value="AIPM_HOMOCIT_SYNTH_2"/>
    <property type="match status" value="1"/>
</dbReference>
<dbReference type="PROSITE" id="PS50991">
    <property type="entry name" value="PYR_CT"/>
    <property type="match status" value="1"/>
</dbReference>
<organism>
    <name type="scientific">Stenotrophomonas maltophilia (strain R551-3)</name>
    <dbReference type="NCBI Taxonomy" id="391008"/>
    <lineage>
        <taxon>Bacteria</taxon>
        <taxon>Pseudomonadati</taxon>
        <taxon>Pseudomonadota</taxon>
        <taxon>Gammaproteobacteria</taxon>
        <taxon>Lysobacterales</taxon>
        <taxon>Lysobacteraceae</taxon>
        <taxon>Stenotrophomonas</taxon>
        <taxon>Stenotrophomonas maltophilia group</taxon>
    </lineage>
</organism>
<proteinExistence type="inferred from homology"/>
<protein>
    <recommendedName>
        <fullName evidence="1">2-isopropylmalate synthase</fullName>
        <ecNumber evidence="1">2.3.3.13</ecNumber>
    </recommendedName>
    <alternativeName>
        <fullName evidence="1">Alpha-IPM synthase</fullName>
    </alternativeName>
    <alternativeName>
        <fullName evidence="1">Alpha-isopropylmalate synthase</fullName>
    </alternativeName>
</protein>
<accession>B4SI67</accession>
<evidence type="ECO:0000255" key="1">
    <source>
        <dbReference type="HAMAP-Rule" id="MF_01025"/>
    </source>
</evidence>
<gene>
    <name evidence="1" type="primary">leuA</name>
    <name type="ordered locus">Smal_3332</name>
</gene>
<feature type="chain" id="PRO_1000149310" description="2-isopropylmalate synthase">
    <location>
        <begin position="1"/>
        <end position="528"/>
    </location>
</feature>
<feature type="domain" description="Pyruvate carboxyltransferase" evidence="1">
    <location>
        <begin position="12"/>
        <end position="279"/>
    </location>
</feature>
<feature type="region of interest" description="Regulatory domain" evidence="1">
    <location>
        <begin position="401"/>
        <end position="528"/>
    </location>
</feature>
<feature type="binding site" evidence="1">
    <location>
        <position position="21"/>
    </location>
    <ligand>
        <name>Mn(2+)</name>
        <dbReference type="ChEBI" id="CHEBI:29035"/>
    </ligand>
</feature>
<feature type="binding site" evidence="1">
    <location>
        <position position="214"/>
    </location>
    <ligand>
        <name>Mn(2+)</name>
        <dbReference type="ChEBI" id="CHEBI:29035"/>
    </ligand>
</feature>
<feature type="binding site" evidence="1">
    <location>
        <position position="216"/>
    </location>
    <ligand>
        <name>Mn(2+)</name>
        <dbReference type="ChEBI" id="CHEBI:29035"/>
    </ligand>
</feature>
<feature type="binding site" evidence="1">
    <location>
        <position position="250"/>
    </location>
    <ligand>
        <name>Mn(2+)</name>
        <dbReference type="ChEBI" id="CHEBI:29035"/>
    </ligand>
</feature>
<name>LEU1_STRM5</name>
<reference key="1">
    <citation type="submission" date="2008-06" db="EMBL/GenBank/DDBJ databases">
        <title>Complete sequence of Stenotrophomonas maltophilia R551-3.</title>
        <authorList>
            <consortium name="US DOE Joint Genome Institute"/>
            <person name="Lucas S."/>
            <person name="Copeland A."/>
            <person name="Lapidus A."/>
            <person name="Glavina del Rio T."/>
            <person name="Dalin E."/>
            <person name="Tice H."/>
            <person name="Pitluck S."/>
            <person name="Chain P."/>
            <person name="Malfatti S."/>
            <person name="Shin M."/>
            <person name="Vergez L."/>
            <person name="Lang D."/>
            <person name="Schmutz J."/>
            <person name="Larimer F."/>
            <person name="Land M."/>
            <person name="Hauser L."/>
            <person name="Kyrpides N."/>
            <person name="Mikhailova N."/>
            <person name="Taghavi S."/>
            <person name="Monchy S."/>
            <person name="Newman L."/>
            <person name="Vangronsveld J."/>
            <person name="van der Lelie D."/>
            <person name="Richardson P."/>
        </authorList>
    </citation>
    <scope>NUCLEOTIDE SEQUENCE [LARGE SCALE GENOMIC DNA]</scope>
    <source>
        <strain>R551-3</strain>
    </source>
</reference>